<dbReference type="EMBL" id="AK090374">
    <property type="protein sequence ID" value="BAC41189.1"/>
    <property type="molecule type" value="mRNA"/>
</dbReference>
<dbReference type="EMBL" id="AK168873">
    <property type="protein sequence ID" value="BAE40691.1"/>
    <property type="molecule type" value="mRNA"/>
</dbReference>
<dbReference type="EMBL" id="AK129305">
    <property type="protein sequence ID" value="BAC98115.1"/>
    <property type="status" value="ALT_INIT"/>
    <property type="molecule type" value="mRNA"/>
</dbReference>
<dbReference type="EMBL" id="BC006595">
    <property type="protein sequence ID" value="AAH06595.1"/>
    <property type="molecule type" value="mRNA"/>
</dbReference>
<dbReference type="CCDS" id="CCDS22565.1">
    <molecule id="Q8BTG7-2"/>
</dbReference>
<dbReference type="CCDS" id="CCDS57634.1">
    <molecule id="Q8BTG7-1"/>
</dbReference>
<dbReference type="CCDS" id="CCDS90441.1">
    <molecule id="Q8BTG7-3"/>
</dbReference>
<dbReference type="RefSeq" id="NP_001181935.1">
    <molecule id="Q8BTG7-1"/>
    <property type="nucleotide sequence ID" value="NM_001195006.2"/>
</dbReference>
<dbReference type="RefSeq" id="NP_001359350.1">
    <molecule id="Q8BTG7-3"/>
    <property type="nucleotide sequence ID" value="NM_001372421.1"/>
</dbReference>
<dbReference type="RefSeq" id="NP_001359352.1">
    <molecule id="Q8BTG7-3"/>
    <property type="nucleotide sequence ID" value="NM_001372423.1"/>
</dbReference>
<dbReference type="RefSeq" id="NP_663577.1">
    <molecule id="Q8BTG7-2"/>
    <property type="nucleotide sequence ID" value="NM_145602.4"/>
</dbReference>
<dbReference type="RefSeq" id="XP_006530930.1">
    <property type="nucleotide sequence ID" value="XM_006530867.1"/>
</dbReference>
<dbReference type="SMR" id="Q8BTG7"/>
<dbReference type="BioGRID" id="231544">
    <property type="interactions" value="3"/>
</dbReference>
<dbReference type="FunCoup" id="Q8BTG7">
    <property type="interactions" value="1319"/>
</dbReference>
<dbReference type="STRING" id="10090.ENSMUSP00000072883"/>
<dbReference type="ESTHER" id="mouse-ndr4">
    <property type="family name" value="Ndr_family"/>
</dbReference>
<dbReference type="MEROPS" id="S33.986"/>
<dbReference type="GlyGen" id="Q8BTG7">
    <property type="glycosylation" value="1 site, 1 O-linked glycan (1 site)"/>
</dbReference>
<dbReference type="iPTMnet" id="Q8BTG7"/>
<dbReference type="PhosphoSitePlus" id="Q8BTG7"/>
<dbReference type="SwissPalm" id="Q8BTG7"/>
<dbReference type="PaxDb" id="10090-ENSMUSP00000079495"/>
<dbReference type="PeptideAtlas" id="Q8BTG7"/>
<dbReference type="ProteomicsDB" id="287463">
    <molecule id="Q8BTG7-1"/>
</dbReference>
<dbReference type="ProteomicsDB" id="287464">
    <molecule id="Q8BTG7-2"/>
</dbReference>
<dbReference type="ProteomicsDB" id="287465">
    <molecule id="Q8BTG7-3"/>
</dbReference>
<dbReference type="Antibodypedia" id="2919">
    <property type="antibodies" value="294 antibodies from 33 providers"/>
</dbReference>
<dbReference type="DNASU" id="234593"/>
<dbReference type="Ensembl" id="ENSMUST00000041318.14">
    <molecule id="Q8BTG7-3"/>
    <property type="protein sequence ID" value="ENSMUSP00000036226.8"/>
    <property type="gene ID" value="ENSMUSG00000036564.18"/>
</dbReference>
<dbReference type="Ensembl" id="ENSMUST00000073139.14">
    <molecule id="Q8BTG7-1"/>
    <property type="protein sequence ID" value="ENSMUSP00000072883.8"/>
    <property type="gene ID" value="ENSMUSG00000036564.18"/>
</dbReference>
<dbReference type="Ensembl" id="ENSMUST00000080666.8">
    <molecule id="Q8BTG7-2"/>
    <property type="protein sequence ID" value="ENSMUSP00000079495.8"/>
    <property type="gene ID" value="ENSMUSG00000036564.18"/>
</dbReference>
<dbReference type="GeneID" id="234593"/>
<dbReference type="KEGG" id="mmu:234593"/>
<dbReference type="UCSC" id="uc009mys.2">
    <molecule id="Q8BTG7-3"/>
    <property type="organism name" value="mouse"/>
</dbReference>
<dbReference type="UCSC" id="uc009myt.2">
    <molecule id="Q8BTG7-2"/>
    <property type="organism name" value="mouse"/>
</dbReference>
<dbReference type="UCSC" id="uc009myu.2">
    <molecule id="Q8BTG7-1"/>
    <property type="organism name" value="mouse"/>
</dbReference>
<dbReference type="AGR" id="MGI:2384590"/>
<dbReference type="CTD" id="65009"/>
<dbReference type="MGI" id="MGI:2384590">
    <property type="gene designation" value="Ndrg4"/>
</dbReference>
<dbReference type="VEuPathDB" id="HostDB:ENSMUSG00000036564"/>
<dbReference type="eggNOG" id="KOG2931">
    <property type="taxonomic scope" value="Eukaryota"/>
</dbReference>
<dbReference type="GeneTree" id="ENSGT00950000182872"/>
<dbReference type="HOGENOM" id="CLU_035361_1_0_1"/>
<dbReference type="InParanoid" id="Q8BTG7"/>
<dbReference type="OMA" id="EHPPDFE"/>
<dbReference type="PhylomeDB" id="Q8BTG7"/>
<dbReference type="TreeFam" id="TF313168"/>
<dbReference type="BioGRID-ORCS" id="234593">
    <property type="hits" value="0 hits in 79 CRISPR screens"/>
</dbReference>
<dbReference type="ChiTaRS" id="Ndrg4">
    <property type="organism name" value="mouse"/>
</dbReference>
<dbReference type="PRO" id="PR:Q8BTG7"/>
<dbReference type="Proteomes" id="UP000000589">
    <property type="component" value="Chromosome 8"/>
</dbReference>
<dbReference type="RNAct" id="Q8BTG7">
    <property type="molecule type" value="protein"/>
</dbReference>
<dbReference type="Bgee" id="ENSMUSG00000036564">
    <property type="expression patterns" value="Expressed in olfactory tubercle and 276 other cell types or tissues"/>
</dbReference>
<dbReference type="ExpressionAtlas" id="Q8BTG7">
    <property type="expression patterns" value="baseline and differential"/>
</dbReference>
<dbReference type="GO" id="GO:0016323">
    <property type="term" value="C:basolateral plasma membrane"/>
    <property type="evidence" value="ECO:0007669"/>
    <property type="project" value="Ensembl"/>
</dbReference>
<dbReference type="GO" id="GO:0031253">
    <property type="term" value="C:cell projection membrane"/>
    <property type="evidence" value="ECO:0000314"/>
    <property type="project" value="BHF-UCL"/>
</dbReference>
<dbReference type="GO" id="GO:0005737">
    <property type="term" value="C:cytoplasm"/>
    <property type="evidence" value="ECO:0000314"/>
    <property type="project" value="BHF-UCL"/>
</dbReference>
<dbReference type="GO" id="GO:0005829">
    <property type="term" value="C:cytosol"/>
    <property type="evidence" value="ECO:0007669"/>
    <property type="project" value="UniProtKB-SubCell"/>
</dbReference>
<dbReference type="GO" id="GO:0060973">
    <property type="term" value="P:cell migration involved in heart development"/>
    <property type="evidence" value="ECO:0000315"/>
    <property type="project" value="BHF-UCL"/>
</dbReference>
<dbReference type="GO" id="GO:0010642">
    <property type="term" value="P:negative regulation of platelet-derived growth factor receptor signaling pathway"/>
    <property type="evidence" value="ECO:0007669"/>
    <property type="project" value="Ensembl"/>
</dbReference>
<dbReference type="GO" id="GO:0014912">
    <property type="term" value="P:negative regulation of smooth muscle cell migration"/>
    <property type="evidence" value="ECO:0007669"/>
    <property type="project" value="Ensembl"/>
</dbReference>
<dbReference type="GO" id="GO:0048662">
    <property type="term" value="P:negative regulation of smooth muscle cell proliferation"/>
    <property type="evidence" value="ECO:0007669"/>
    <property type="project" value="Ensembl"/>
</dbReference>
<dbReference type="GO" id="GO:0070374">
    <property type="term" value="P:positive regulation of ERK1 and ERK2 cascade"/>
    <property type="evidence" value="ECO:0007669"/>
    <property type="project" value="Ensembl"/>
</dbReference>
<dbReference type="GO" id="GO:2001135">
    <property type="term" value="P:regulation of endocytic recycling"/>
    <property type="evidence" value="ECO:0000315"/>
    <property type="project" value="BHF-UCL"/>
</dbReference>
<dbReference type="GO" id="GO:0048278">
    <property type="term" value="P:vesicle docking"/>
    <property type="evidence" value="ECO:0000315"/>
    <property type="project" value="BHF-UCL"/>
</dbReference>
<dbReference type="GO" id="GO:0008542">
    <property type="term" value="P:visual learning"/>
    <property type="evidence" value="ECO:0000315"/>
    <property type="project" value="BHF-UCL"/>
</dbReference>
<dbReference type="FunFam" id="3.40.50.1820:FF:000009">
    <property type="entry name" value="NDRG family member 4"/>
    <property type="match status" value="1"/>
</dbReference>
<dbReference type="Gene3D" id="3.40.50.1820">
    <property type="entry name" value="alpha/beta hydrolase"/>
    <property type="match status" value="1"/>
</dbReference>
<dbReference type="InterPro" id="IPR029058">
    <property type="entry name" value="AB_hydrolase_fold"/>
</dbReference>
<dbReference type="InterPro" id="IPR004142">
    <property type="entry name" value="NDRG"/>
</dbReference>
<dbReference type="PANTHER" id="PTHR11034">
    <property type="entry name" value="N-MYC DOWNSTREAM REGULATED"/>
    <property type="match status" value="1"/>
</dbReference>
<dbReference type="Pfam" id="PF03096">
    <property type="entry name" value="Ndr"/>
    <property type="match status" value="1"/>
</dbReference>
<dbReference type="SUPFAM" id="SSF53474">
    <property type="entry name" value="alpha/beta-Hydrolases"/>
    <property type="match status" value="1"/>
</dbReference>
<reference key="1">
    <citation type="journal article" date="2005" name="Science">
        <title>The transcriptional landscape of the mammalian genome.</title>
        <authorList>
            <person name="Carninci P."/>
            <person name="Kasukawa T."/>
            <person name="Katayama S."/>
            <person name="Gough J."/>
            <person name="Frith M.C."/>
            <person name="Maeda N."/>
            <person name="Oyama R."/>
            <person name="Ravasi T."/>
            <person name="Lenhard B."/>
            <person name="Wells C."/>
            <person name="Kodzius R."/>
            <person name="Shimokawa K."/>
            <person name="Bajic V.B."/>
            <person name="Brenner S.E."/>
            <person name="Batalov S."/>
            <person name="Forrest A.R."/>
            <person name="Zavolan M."/>
            <person name="Davis M.J."/>
            <person name="Wilming L.G."/>
            <person name="Aidinis V."/>
            <person name="Allen J.E."/>
            <person name="Ambesi-Impiombato A."/>
            <person name="Apweiler R."/>
            <person name="Aturaliya R.N."/>
            <person name="Bailey T.L."/>
            <person name="Bansal M."/>
            <person name="Baxter L."/>
            <person name="Beisel K.W."/>
            <person name="Bersano T."/>
            <person name="Bono H."/>
            <person name="Chalk A.M."/>
            <person name="Chiu K.P."/>
            <person name="Choudhary V."/>
            <person name="Christoffels A."/>
            <person name="Clutterbuck D.R."/>
            <person name="Crowe M.L."/>
            <person name="Dalla E."/>
            <person name="Dalrymple B.P."/>
            <person name="de Bono B."/>
            <person name="Della Gatta G."/>
            <person name="di Bernardo D."/>
            <person name="Down T."/>
            <person name="Engstrom P."/>
            <person name="Fagiolini M."/>
            <person name="Faulkner G."/>
            <person name="Fletcher C.F."/>
            <person name="Fukushima T."/>
            <person name="Furuno M."/>
            <person name="Futaki S."/>
            <person name="Gariboldi M."/>
            <person name="Georgii-Hemming P."/>
            <person name="Gingeras T.R."/>
            <person name="Gojobori T."/>
            <person name="Green R.E."/>
            <person name="Gustincich S."/>
            <person name="Harbers M."/>
            <person name="Hayashi Y."/>
            <person name="Hensch T.K."/>
            <person name="Hirokawa N."/>
            <person name="Hill D."/>
            <person name="Huminiecki L."/>
            <person name="Iacono M."/>
            <person name="Ikeo K."/>
            <person name="Iwama A."/>
            <person name="Ishikawa T."/>
            <person name="Jakt M."/>
            <person name="Kanapin A."/>
            <person name="Katoh M."/>
            <person name="Kawasawa Y."/>
            <person name="Kelso J."/>
            <person name="Kitamura H."/>
            <person name="Kitano H."/>
            <person name="Kollias G."/>
            <person name="Krishnan S.P."/>
            <person name="Kruger A."/>
            <person name="Kummerfeld S.K."/>
            <person name="Kurochkin I.V."/>
            <person name="Lareau L.F."/>
            <person name="Lazarevic D."/>
            <person name="Lipovich L."/>
            <person name="Liu J."/>
            <person name="Liuni S."/>
            <person name="McWilliam S."/>
            <person name="Madan Babu M."/>
            <person name="Madera M."/>
            <person name="Marchionni L."/>
            <person name="Matsuda H."/>
            <person name="Matsuzawa S."/>
            <person name="Miki H."/>
            <person name="Mignone F."/>
            <person name="Miyake S."/>
            <person name="Morris K."/>
            <person name="Mottagui-Tabar S."/>
            <person name="Mulder N."/>
            <person name="Nakano N."/>
            <person name="Nakauchi H."/>
            <person name="Ng P."/>
            <person name="Nilsson R."/>
            <person name="Nishiguchi S."/>
            <person name="Nishikawa S."/>
            <person name="Nori F."/>
            <person name="Ohara O."/>
            <person name="Okazaki Y."/>
            <person name="Orlando V."/>
            <person name="Pang K.C."/>
            <person name="Pavan W.J."/>
            <person name="Pavesi G."/>
            <person name="Pesole G."/>
            <person name="Petrovsky N."/>
            <person name="Piazza S."/>
            <person name="Reed J."/>
            <person name="Reid J.F."/>
            <person name="Ring B.Z."/>
            <person name="Ringwald M."/>
            <person name="Rost B."/>
            <person name="Ruan Y."/>
            <person name="Salzberg S.L."/>
            <person name="Sandelin A."/>
            <person name="Schneider C."/>
            <person name="Schoenbach C."/>
            <person name="Sekiguchi K."/>
            <person name="Semple C.A."/>
            <person name="Seno S."/>
            <person name="Sessa L."/>
            <person name="Sheng Y."/>
            <person name="Shibata Y."/>
            <person name="Shimada H."/>
            <person name="Shimada K."/>
            <person name="Silva D."/>
            <person name="Sinclair B."/>
            <person name="Sperling S."/>
            <person name="Stupka E."/>
            <person name="Sugiura K."/>
            <person name="Sultana R."/>
            <person name="Takenaka Y."/>
            <person name="Taki K."/>
            <person name="Tammoja K."/>
            <person name="Tan S.L."/>
            <person name="Tang S."/>
            <person name="Taylor M.S."/>
            <person name="Tegner J."/>
            <person name="Teichmann S.A."/>
            <person name="Ueda H.R."/>
            <person name="van Nimwegen E."/>
            <person name="Verardo R."/>
            <person name="Wei C.L."/>
            <person name="Yagi K."/>
            <person name="Yamanishi H."/>
            <person name="Zabarovsky E."/>
            <person name="Zhu S."/>
            <person name="Zimmer A."/>
            <person name="Hide W."/>
            <person name="Bult C."/>
            <person name="Grimmond S.M."/>
            <person name="Teasdale R.D."/>
            <person name="Liu E.T."/>
            <person name="Brusic V."/>
            <person name="Quackenbush J."/>
            <person name="Wahlestedt C."/>
            <person name="Mattick J.S."/>
            <person name="Hume D.A."/>
            <person name="Kai C."/>
            <person name="Sasaki D."/>
            <person name="Tomaru Y."/>
            <person name="Fukuda S."/>
            <person name="Kanamori-Katayama M."/>
            <person name="Suzuki M."/>
            <person name="Aoki J."/>
            <person name="Arakawa T."/>
            <person name="Iida J."/>
            <person name="Imamura K."/>
            <person name="Itoh M."/>
            <person name="Kato T."/>
            <person name="Kawaji H."/>
            <person name="Kawagashira N."/>
            <person name="Kawashima T."/>
            <person name="Kojima M."/>
            <person name="Kondo S."/>
            <person name="Konno H."/>
            <person name="Nakano K."/>
            <person name="Ninomiya N."/>
            <person name="Nishio T."/>
            <person name="Okada M."/>
            <person name="Plessy C."/>
            <person name="Shibata K."/>
            <person name="Shiraki T."/>
            <person name="Suzuki S."/>
            <person name="Tagami M."/>
            <person name="Waki K."/>
            <person name="Watahiki A."/>
            <person name="Okamura-Oho Y."/>
            <person name="Suzuki H."/>
            <person name="Kawai J."/>
            <person name="Hayashizaki Y."/>
        </authorList>
    </citation>
    <scope>NUCLEOTIDE SEQUENCE [LARGE SCALE MRNA] (ISOFORM 1)</scope>
    <source>
        <strain>C57BL/6J</strain>
        <tissue>Heart</tissue>
        <tissue>Medulla oblongata</tissue>
    </source>
</reference>
<reference key="2">
    <citation type="journal article" date="2003" name="DNA Res.">
        <title>Prediction of the coding sequences of mouse homologues of KIAA gene: III. The complete nucleotide sequences of 500 mouse KIAA-homologous cDNAs identified by screening of terminal sequences of cDNA clones randomly sampled from size-fractionated libraries.</title>
        <authorList>
            <person name="Okazaki N."/>
            <person name="Kikuno R."/>
            <person name="Ohara R."/>
            <person name="Inamoto S."/>
            <person name="Koseki H."/>
            <person name="Hiraoka S."/>
            <person name="Saga Y."/>
            <person name="Nagase T."/>
            <person name="Ohara O."/>
            <person name="Koga H."/>
        </authorList>
    </citation>
    <scope>NUCLEOTIDE SEQUENCE [LARGE SCALE MRNA] (ISOFORM 3)</scope>
    <source>
        <tissue>Brain</tissue>
    </source>
</reference>
<reference key="3">
    <citation type="journal article" date="2004" name="Genome Res.">
        <title>The status, quality, and expansion of the NIH full-length cDNA project: the Mammalian Gene Collection (MGC).</title>
        <authorList>
            <consortium name="The MGC Project Team"/>
        </authorList>
    </citation>
    <scope>NUCLEOTIDE SEQUENCE [LARGE SCALE MRNA] (ISOFORM 2)</scope>
    <source>
        <strain>FVB/N</strain>
        <tissue>Mammary gland</tissue>
    </source>
</reference>
<reference key="4">
    <citation type="journal article" date="2007" name="Mol. Cell. Proteomics">
        <title>Qualitative and quantitative analyses of protein phosphorylation in naive and stimulated mouse synaptosomal preparations.</title>
        <authorList>
            <person name="Munton R.P."/>
            <person name="Tweedie-Cullen R."/>
            <person name="Livingstone-Zatchej M."/>
            <person name="Weinandy F."/>
            <person name="Waidelich M."/>
            <person name="Longo D."/>
            <person name="Gehrig P."/>
            <person name="Potthast F."/>
            <person name="Rutishauser D."/>
            <person name="Gerrits B."/>
            <person name="Panse C."/>
            <person name="Schlapbach R."/>
            <person name="Mansuy I.M."/>
        </authorList>
    </citation>
    <scope>IDENTIFICATION BY MASS SPECTROMETRY [LARGE SCALE ANALYSIS]</scope>
    <source>
        <tissue>Brain cortex</tissue>
    </source>
</reference>
<reference key="5">
    <citation type="journal article" date="2010" name="Cell">
        <title>A tissue-specific atlas of mouse protein phosphorylation and expression.</title>
        <authorList>
            <person name="Huttlin E.L."/>
            <person name="Jedrychowski M.P."/>
            <person name="Elias J.E."/>
            <person name="Goswami T."/>
            <person name="Rad R."/>
            <person name="Beausoleil S.A."/>
            <person name="Villen J."/>
            <person name="Haas W."/>
            <person name="Sowa M.E."/>
            <person name="Gygi S.P."/>
        </authorList>
    </citation>
    <scope>PHOSPHORYLATION [LARGE SCALE ANALYSIS] AT SER-323</scope>
    <scope>PHOSPHORYLATION [LARGE SCALE ANALYSIS] AT SER-293 (ISOFORM 2)</scope>
    <scope>IDENTIFICATION BY MASS SPECTROMETRY [LARGE SCALE ANALYSIS]</scope>
    <source>
        <tissue>Brain</tissue>
    </source>
</reference>
<reference key="6">
    <citation type="journal article" date="2011" name="J. Biol. Chem.">
        <title>NDRG4 protein-deficient mice exhibit spatial learning deficits and vulnerabilities to cerebral ischemia.</title>
        <authorList>
            <person name="Yamamoto H."/>
            <person name="Kokame K."/>
            <person name="Okuda T."/>
            <person name="Nakajo Y."/>
            <person name="Yanamoto H."/>
            <person name="Miyata T."/>
        </authorList>
    </citation>
    <scope>FUNCTION</scope>
    <scope>DISRUPTION PHENOTYPE</scope>
    <scope>TISSUE SPECIFICITY</scope>
</reference>
<evidence type="ECO:0000250" key="1"/>
<evidence type="ECO:0000250" key="2">
    <source>
        <dbReference type="UniProtKB" id="Q9Z2L9"/>
    </source>
</evidence>
<evidence type="ECO:0000256" key="3">
    <source>
        <dbReference type="SAM" id="MobiDB-lite"/>
    </source>
</evidence>
<evidence type="ECO:0000269" key="4">
    <source>
    </source>
</evidence>
<evidence type="ECO:0000303" key="5">
    <source>
    </source>
</evidence>
<evidence type="ECO:0000303" key="6">
    <source>
    </source>
</evidence>
<evidence type="ECO:0000305" key="7"/>
<evidence type="ECO:0007744" key="8">
    <source>
    </source>
</evidence>
<protein>
    <recommendedName>
        <fullName>Protein NDRG4</fullName>
    </recommendedName>
    <alternativeName>
        <fullName>N-myc downstream-regulated gene 4 protein</fullName>
    </alternativeName>
    <alternativeName>
        <fullName>Protein Ndr4</fullName>
    </alternativeName>
</protein>
<keyword id="KW-0025">Alternative splicing</keyword>
<keyword id="KW-0963">Cytoplasm</keyword>
<keyword id="KW-0597">Phosphoprotein</keyword>
<keyword id="KW-1185">Reference proteome</keyword>
<proteinExistence type="evidence at protein level"/>
<gene>
    <name type="primary">Ndrg4</name>
    <name type="synonym">Kiaa1180</name>
    <name type="synonym">Ndr4</name>
</gene>
<comment type="function">
    <text evidence="4">Contributes to the maintenance of intracerebral BDNF levels within the normal range, which is necessary for the preservation of spatial learning and the resistance to neuronal cell death caused by ischemic stress. May enhance growth factor-induced ERK1 and ERK2 phosphorylation. May attenuate NGF-promoted ELK1 phosphorylation in a microtubule-dependent manner.</text>
</comment>
<comment type="subcellular location">
    <subcellularLocation>
        <location evidence="1">Cytoplasm</location>
        <location evidence="1">Cytosol</location>
    </subcellularLocation>
</comment>
<comment type="alternative products">
    <event type="alternative splicing"/>
    <isoform>
        <id>Q8BTG7-1</id>
        <name>1</name>
        <sequence type="displayed"/>
    </isoform>
    <isoform>
        <id>Q8BTG7-2</id>
        <name>2</name>
        <sequence type="described" ref="VSP_022959"/>
    </isoform>
    <isoform>
        <id>Q8BTG7-3</id>
        <name>3</name>
        <sequence type="described" ref="VSP_022958"/>
    </isoform>
</comment>
<comment type="tissue specificity">
    <text evidence="4">Predominantly expressed in the brain (at protein level). Detected in neurons of various parts of brain, including the olfactory bulb, olfactory tuberculum, cerebral cortex, striatum, hippocampus, dentate gyrus, thalamus, hypothalamus, mesencephalon, cerebellum, pons and medulla oblongata.</text>
</comment>
<comment type="disruption phenotype">
    <text evidence="4">Mutant mice have impaired spatial learning and memory but normal motor function.</text>
</comment>
<comment type="similarity">
    <text evidence="7">Belongs to the NDRG family.</text>
</comment>
<comment type="sequence caution" evidence="7">
    <conflict type="erroneous initiation">
        <sequence resource="EMBL-CDS" id="BAC98115"/>
    </conflict>
    <text>Extended N-terminus.</text>
</comment>
<sequence>MPECWDGEHDIETPYGLLHVVIRGSPKGNRPAILTYHDVGLNHKLCFNTFFNFEDMQEITKHFVVCHVDAPGQQVGASQFPQGYQFPSMEQLAAMLPSVVQHFGFKYVIGIGVGAGAYVLAKFALIFPDLVEGLVLMNIDPNGKGWIDWAATKLSGLTSTLPDTVLSHLFSQEELVNNTELVQSYRQQISNVVNQANLQLFWNMYNSRRDLDINRPGTVPNAKTLRCPVMLVVGDNAPAEEGVVECNSKLDPTTTTFLKMADSGGLPQVTQPGKLTEAFKYFLQGMGYIAHLKDRRLSGGAVPSASMTRLARSRTASLTSASSVDGSRPQPCAHSDSSEGMGQVNHTMEVSC</sequence>
<organism>
    <name type="scientific">Mus musculus</name>
    <name type="common">Mouse</name>
    <dbReference type="NCBI Taxonomy" id="10090"/>
    <lineage>
        <taxon>Eukaryota</taxon>
        <taxon>Metazoa</taxon>
        <taxon>Chordata</taxon>
        <taxon>Craniata</taxon>
        <taxon>Vertebrata</taxon>
        <taxon>Euteleostomi</taxon>
        <taxon>Mammalia</taxon>
        <taxon>Eutheria</taxon>
        <taxon>Euarchontoglires</taxon>
        <taxon>Glires</taxon>
        <taxon>Rodentia</taxon>
        <taxon>Myomorpha</taxon>
        <taxon>Muroidea</taxon>
        <taxon>Muridae</taxon>
        <taxon>Murinae</taxon>
        <taxon>Mus</taxon>
        <taxon>Mus</taxon>
    </lineage>
</organism>
<accession>Q8BTG7</accession>
<accession>Q6ZPW3</accession>
<accession>Q923D7</accession>
<name>NDRG4_MOUSE</name>
<feature type="chain" id="PRO_0000159580" description="Protein NDRG4">
    <location>
        <begin position="1"/>
        <end position="352"/>
    </location>
</feature>
<feature type="region of interest" description="Disordered" evidence="3">
    <location>
        <begin position="301"/>
        <end position="352"/>
    </location>
</feature>
<feature type="compositionally biased region" description="Low complexity" evidence="3">
    <location>
        <begin position="308"/>
        <end position="323"/>
    </location>
</feature>
<feature type="compositionally biased region" description="Polar residues" evidence="3">
    <location>
        <begin position="338"/>
        <end position="352"/>
    </location>
</feature>
<feature type="modified residue" description="Phosphoserine" evidence="2">
    <location>
        <position position="298"/>
    </location>
</feature>
<feature type="modified residue" description="Phosphoserine" evidence="2">
    <location>
        <position position="317"/>
    </location>
</feature>
<feature type="modified residue" description="Phosphoserine" evidence="8">
    <location>
        <position position="323"/>
    </location>
</feature>
<feature type="splice variant" id="VSP_022958" description="In isoform 3." evidence="5">
    <original>MPECWDG</original>
    <variation>MKVLGHRLQLLTGLLLHDVTMAGLQELRFPEEKPLLRGQDATEMDNPDAFLSIVDTDWK</variation>
    <location>
        <begin position="1"/>
        <end position="7"/>
    </location>
</feature>
<feature type="splice variant" id="VSP_022959" description="In isoform 2." evidence="6">
    <original>IAHLKDRRLSGGAV</original>
    <variation>M</variation>
    <location>
        <begin position="289"/>
        <end position="302"/>
    </location>
</feature>
<feature type="modified residue" description="Phosphoserine" evidence="8">
    <location sequence="Q8BTG7-2">
        <position position="293"/>
    </location>
</feature>